<proteinExistence type="predicted"/>
<evidence type="ECO:0000305" key="1"/>
<feature type="chain" id="PRO_0000066238" description="Uncharacterized protein in glnR 5'region">
    <location>
        <begin position="1" status="less than"/>
        <end position="80"/>
    </location>
</feature>
<feature type="non-terminal residue">
    <location>
        <position position="1"/>
    </location>
</feature>
<dbReference type="EMBL" id="D00513">
    <property type="protein sequence ID" value="BAA20526.1"/>
    <property type="molecule type" value="Genomic_DNA"/>
</dbReference>
<dbReference type="SMR" id="P45625"/>
<dbReference type="eggNOG" id="COG4100">
    <property type="taxonomic scope" value="Bacteria"/>
</dbReference>
<dbReference type="Gene3D" id="3.90.1150.60">
    <property type="entry name" value="Methioning gamme-lyase, C-terminal domain"/>
    <property type="match status" value="1"/>
</dbReference>
<dbReference type="InterPro" id="IPR009651">
    <property type="entry name" value="Met_g_lyase_put"/>
</dbReference>
<dbReference type="PANTHER" id="PTHR46658">
    <property type="entry name" value="CYS OR MET METABOLISM PYRIDOXAL-PHOSPHATE-DEPENDENT ENZYME"/>
    <property type="match status" value="1"/>
</dbReference>
<dbReference type="PANTHER" id="PTHR46658:SF1">
    <property type="entry name" value="CYS OR MET METABOLISM PYRIDOXAL-PHOSPHATE-DEPENDENT ENZYME"/>
    <property type="match status" value="1"/>
</dbReference>
<dbReference type="Pfam" id="PF06838">
    <property type="entry name" value="Met_gamma_lyase"/>
    <property type="match status" value="1"/>
</dbReference>
<reference key="1">
    <citation type="journal article" date="1989" name="J. Biochem.">
        <title>Nucleotide sequence of the glutamine synthetase gene (glnA) and its upstream region from Bacillus cereus.</title>
        <authorList>
            <person name="Nakano Y."/>
            <person name="Kato C."/>
            <person name="Tanaka E."/>
            <person name="Kimura K."/>
            <person name="Horikoshi K."/>
        </authorList>
    </citation>
    <scope>NUCLEOTIDE SEQUENCE [GENOMIC DNA]</scope>
    <source>
        <strain>NBRC 3131</strain>
    </source>
</reference>
<accession>P45625</accession>
<protein>
    <recommendedName>
        <fullName>Uncharacterized protein in glnR 5'region</fullName>
    </recommendedName>
</protein>
<sequence>ASPINSHFTPYANYMPGYEDDVIMAAGTFIQGASIELSADGPIRPPYVAYVQGGLTYSHVKIAICSAIDALIEKELLTIS</sequence>
<organism>
    <name type="scientific">Bacillus cereus</name>
    <dbReference type="NCBI Taxonomy" id="1396"/>
    <lineage>
        <taxon>Bacteria</taxon>
        <taxon>Bacillati</taxon>
        <taxon>Bacillota</taxon>
        <taxon>Bacilli</taxon>
        <taxon>Bacillales</taxon>
        <taxon>Bacillaceae</taxon>
        <taxon>Bacillus</taxon>
        <taxon>Bacillus cereus group</taxon>
    </lineage>
</organism>
<name>YGLN_BACCE</name>
<comment type="similarity">
    <text evidence="1">To B.cereus similar ORF in glnR 5'region.</text>
</comment>